<organism>
    <name type="scientific">Scolopendra alternans</name>
    <name type="common">Florida Keys giant centipede</name>
    <dbReference type="NCBI Taxonomy" id="1329349"/>
    <lineage>
        <taxon>Eukaryota</taxon>
        <taxon>Metazoa</taxon>
        <taxon>Ecdysozoa</taxon>
        <taxon>Arthropoda</taxon>
        <taxon>Myriapoda</taxon>
        <taxon>Chilopoda</taxon>
        <taxon>Pleurostigmophora</taxon>
        <taxon>Scolopendromorpha</taxon>
        <taxon>Scolopendridae</taxon>
        <taxon>Scolopendra</taxon>
    </lineage>
</organism>
<dbReference type="SMR" id="P0DQB5"/>
<dbReference type="GO" id="GO:0005576">
    <property type="term" value="C:extracellular region"/>
    <property type="evidence" value="ECO:0007669"/>
    <property type="project" value="UniProtKB-SubCell"/>
</dbReference>
<dbReference type="GO" id="GO:0090729">
    <property type="term" value="F:toxin activity"/>
    <property type="evidence" value="ECO:0007669"/>
    <property type="project" value="UniProtKB-KW"/>
</dbReference>
<protein>
    <recommendedName>
        <fullName evidence="2">U-scoloptoxin(14)-Sa1a</fullName>
        <shortName evidence="2">U-SLPTX(14)-Sa1a</shortName>
    </recommendedName>
</protein>
<evidence type="ECO:0000255" key="1"/>
<evidence type="ECO:0000303" key="2">
    <source>
    </source>
</evidence>
<evidence type="ECO:0000305" key="3"/>
<evidence type="ECO:0000305" key="4">
    <source>
    </source>
</evidence>
<sequence>MNRILGMIFLFCLISCYAVDIIQSAKSNGCSVELVKRCQERKCASPCCRDGECHCGCK</sequence>
<comment type="subcellular location">
    <subcellularLocation>
        <location evidence="4">Secreted</location>
    </subcellularLocation>
</comment>
<comment type="tissue specificity">
    <text evidence="4">Expressed by the venom gland.</text>
</comment>
<comment type="PTM">
    <text evidence="3">Contains 4 disulfide bonds.</text>
</comment>
<comment type="similarity">
    <text evidence="3">Belongs to the scoloptoxin-14 family.</text>
</comment>
<comment type="online information" name="National Center for Biotechnology Information (NCBI)">
    <link uri="https://www.ncbi.nlm.nih.gov/nuccore/GASK01000041"/>
</comment>
<proteinExistence type="inferred from homology"/>
<keyword id="KW-1015">Disulfide bond</keyword>
<keyword id="KW-0964">Secreted</keyword>
<keyword id="KW-0732">Signal</keyword>
<keyword id="KW-0800">Toxin</keyword>
<accession>P0DQB5</accession>
<feature type="signal peptide" evidence="1">
    <location>
        <begin position="1"/>
        <end position="18"/>
    </location>
</feature>
<feature type="chain" id="PRO_0000446786" description="U-scoloptoxin(14)-Sa1a" evidence="3">
    <location>
        <begin position="19"/>
        <end position="58"/>
    </location>
</feature>
<name>TXE1A_SCOAL</name>
<reference key="1">
    <citation type="journal article" date="2014" name="Mol. Biol. Evol.">
        <title>Clawing through evolution: toxin diversification and convergence in the ancient lineage Chilopoda (centipedes).</title>
        <authorList>
            <person name="Undheim E.A."/>
            <person name="Jones A."/>
            <person name="Clauser K.R."/>
            <person name="Holland J.W."/>
            <person name="Pineda S.S."/>
            <person name="King G.F."/>
            <person name="Fry B.G."/>
        </authorList>
    </citation>
    <scope>NUCLEOTIDE SEQUENCE [MRNA]</scope>
    <scope>NOMENCLATURE</scope>
    <source>
        <tissue>Venom gland</tissue>
    </source>
</reference>